<feature type="chain" id="PRO_0000462522" description="Kallikrein-like enzyme LV-Ka" evidence="3">
    <location>
        <begin position="1"/>
        <end position="194"/>
    </location>
</feature>
<feature type="domain" description="Peptidase S1" evidence="2">
    <location>
        <begin position="36"/>
        <end position="185"/>
    </location>
</feature>
<feature type="active site" description="Charge relay system" evidence="1">
    <location>
        <position position="140"/>
    </location>
</feature>
<feature type="disulfide bond" evidence="2">
    <location>
        <begin position="7"/>
        <end position="99"/>
    </location>
</feature>
<feature type="disulfide bond" evidence="5">
    <location>
        <begin position="26"/>
        <end status="unknown"/>
    </location>
</feature>
<feature type="disulfide bond" evidence="2">
    <location>
        <begin position="44"/>
        <end position="192"/>
    </location>
</feature>
<feature type="disulfide bond" evidence="2">
    <location>
        <begin position="78"/>
        <end position="146"/>
    </location>
</feature>
<feature type="disulfide bond" evidence="2">
    <location>
        <begin position="110"/>
        <end position="125"/>
    </location>
</feature>
<feature type="disulfide bond" evidence="2">
    <location>
        <begin position="136"/>
        <end position="161"/>
    </location>
</feature>
<feature type="unsure residue" description="Assigned by comparison with orthologs" evidence="5">
    <location>
        <begin position="154"/>
        <end position="158"/>
    </location>
</feature>
<feature type="unsure residue" description="Assigned by comparison with orthologs" evidence="5">
    <location>
        <begin position="165"/>
        <end position="172"/>
    </location>
</feature>
<feature type="non-consecutive residues" evidence="5">
    <location>
        <begin position="40"/>
        <end position="41"/>
    </location>
</feature>
<feature type="non-consecutive residues" evidence="5">
    <location>
        <begin position="55"/>
        <end position="56"/>
    </location>
</feature>
<organism>
    <name type="scientific">Lachesis muta muta</name>
    <name type="common">Bushmaster</name>
    <dbReference type="NCBI Taxonomy" id="8753"/>
    <lineage>
        <taxon>Eukaryota</taxon>
        <taxon>Metazoa</taxon>
        <taxon>Chordata</taxon>
        <taxon>Craniata</taxon>
        <taxon>Vertebrata</taxon>
        <taxon>Euteleostomi</taxon>
        <taxon>Lepidosauria</taxon>
        <taxon>Squamata</taxon>
        <taxon>Bifurcata</taxon>
        <taxon>Unidentata</taxon>
        <taxon>Episquamata</taxon>
        <taxon>Toxicofera</taxon>
        <taxon>Serpentes</taxon>
        <taxon>Colubroidea</taxon>
        <taxon>Viperidae</taxon>
        <taxon>Crotalinae</taxon>
        <taxon>Lachesis</taxon>
    </lineage>
</organism>
<keyword id="KW-0903">Direct protein sequencing</keyword>
<keyword id="KW-1015">Disulfide bond</keyword>
<keyword id="KW-0325">Glycoprotein</keyword>
<keyword id="KW-0378">Hydrolase</keyword>
<keyword id="KW-0382">Hypotensive agent</keyword>
<keyword id="KW-0645">Protease</keyword>
<keyword id="KW-0964">Secreted</keyword>
<keyword id="KW-0720">Serine protease</keyword>
<keyword id="KW-0800">Toxin</keyword>
<comment type="function">
    <text evidence="3">Shows kallikrein-like activity, releasing bradykinin from kininogen. Also activates plasminogen, which is also a plasma kallikrein activity. Is active upon the kallikrein substrates S-2266 and S-2302, suggesting a preference for Arg in P1 position. In vivo, lowers blood pressure after intravenous injection in rat.</text>
</comment>
<comment type="activity regulation">
    <text evidence="3">Completely inhibited by the serine protease inhibitors NPGB and PMSF, partially inhibited by benzamidines, and weakly or not inhibited by SBTI and EDTA.</text>
</comment>
<comment type="biophysicochemical properties">
    <phDependence>
        <text evidence="3">Optimum pH is 7-9.</text>
    </phDependence>
    <temperatureDependence>
        <text evidence="3">Optimum temperature is 30-40 degrees Celsius.</text>
    </temperatureDependence>
</comment>
<comment type="subunit">
    <text evidence="3">Monomer.</text>
</comment>
<comment type="subcellular location">
    <subcellularLocation>
        <location evidence="3">Secreted</location>
    </subcellularLocation>
</comment>
<comment type="tissue specificity">
    <text evidence="6">Expressed by the venom gland.</text>
</comment>
<comment type="PTM">
    <text evidence="3">N-glycosylated.</text>
</comment>
<comment type="miscellaneous">
    <text evidence="3">Negative results: has no fibrin(ogeno)lytic activity, no coagulant effect, and no plasmin-like activity. Does not inhibit platelet aggregation. Has no proteolytic effect on dimethylcasein and insulin B chain.</text>
</comment>
<comment type="similarity">
    <text evidence="2">Belongs to the peptidase S1 family. Snake venom subfamily.</text>
</comment>
<dbReference type="PROSITE" id="PS50240">
    <property type="entry name" value="TRYPSIN_DOM"/>
    <property type="match status" value="1"/>
</dbReference>
<dbReference type="PROSITE" id="PS00135">
    <property type="entry name" value="TRYPSIN_SER"/>
    <property type="match status" value="1"/>
</dbReference>
<protein>
    <recommendedName>
        <fullName evidence="4">Kallikrein-like enzyme LV-Ka</fullName>
    </recommendedName>
    <alternativeName>
        <fullName evidence="5">Snake venom serine protease</fullName>
        <shortName evidence="5">SVSP</shortName>
    </alternativeName>
</protein>
<evidence type="ECO:0000250" key="1">
    <source>
        <dbReference type="UniProtKB" id="O15393"/>
    </source>
</evidence>
<evidence type="ECO:0000255" key="2">
    <source>
        <dbReference type="PROSITE-ProRule" id="PRU00274"/>
    </source>
</evidence>
<evidence type="ECO:0000269" key="3">
    <source>
    </source>
</evidence>
<evidence type="ECO:0000303" key="4">
    <source>
    </source>
</evidence>
<evidence type="ECO:0000305" key="5"/>
<evidence type="ECO:0000305" key="6">
    <source>
    </source>
</evidence>
<proteinExistence type="evidence at protein level"/>
<sequence>VVGGDECNINEHRSLVAIFVSTGFFCSGTLINQEVLNQEDKFICPNXKKNNEVLDVTNSENIVPLSLPSSPPSVGSVCRIMGWGTITPEKKTYPNVPHCANINLLDDAECHVGYERQGKEYRTLCAGVVQGGKDTCQGDSGGPLICNGQFQGIVSWGPHPCGHPGEPGVYTKVFDYTEWIQSIIAGNTAATCPP</sequence>
<name>VSPKA_LACMU</name>
<accession>P0DRJ7</accession>
<reference key="1">
    <citation type="journal article" date="2003" name="Protein Expr. Purif.">
        <title>Kallikrein-like proteinase from bushmaster snake venom.</title>
        <authorList>
            <person name="Felicori L.F."/>
            <person name="Souza C.T."/>
            <person name="Velarde D.T."/>
            <person name="Magalhaes A."/>
            <person name="Almeida A.P."/>
            <person name="Figueiredo S."/>
            <person name="Richardson M."/>
            <person name="Diniz C.R."/>
            <person name="Sanchez E.F."/>
        </authorList>
    </citation>
    <scope>PROTEIN SEQUENCE</scope>
    <scope>FUNCTION</scope>
    <scope>BIOASSAY</scope>
    <scope>SUBCELLULAR LOCATION</scope>
    <scope>SUBUNIT</scope>
    <scope>BIOPHYSICOCHEMICAL PROPERTIES</scope>
    <scope>GLYCOSYLATED</scope>
    <scope>ACTIVITY REGULATION</scope>
    <source>
        <tissue>Venom</tissue>
    </source>
</reference>